<protein>
    <recommendedName>
        <fullName>Vasopressin-neurophysin 2-copeptin</fullName>
    </recommendedName>
    <alternativeName>
        <fullName>AVP-NPII</fullName>
    </alternativeName>
    <component>
        <recommendedName>
            <fullName>Arg-vasopressin</fullName>
        </recommendedName>
        <alternativeName>
            <fullName>Arginine-vasopressin</fullName>
        </alternativeName>
    </component>
    <component>
        <recommendedName>
            <fullName>Neurophysin 2</fullName>
        </recommendedName>
        <alternativeName>
            <fullName>Neurophysin-I</fullName>
        </alternativeName>
    </component>
    <component>
        <recommendedName>
            <fullName>Copeptin</fullName>
        </recommendedName>
    </component>
</protein>
<accession>P01186</accession>
<evidence type="ECO:0000250" key="1">
    <source>
        <dbReference type="UniProtKB" id="P01175"/>
    </source>
</evidence>
<evidence type="ECO:0000250" key="2">
    <source>
        <dbReference type="UniProtKB" id="P01185"/>
    </source>
</evidence>
<evidence type="ECO:0000269" key="3">
    <source>
    </source>
</evidence>
<evidence type="ECO:0000305" key="4"/>
<name>NEU2_RAT</name>
<dbReference type="EMBL" id="X59496">
    <property type="protein sequence ID" value="CAA42086.1"/>
    <property type="molecule type" value="Genomic_DNA"/>
</dbReference>
<dbReference type="EMBL" id="M25646">
    <property type="protein sequence ID" value="AAA42342.1"/>
    <property type="status" value="ALT_INIT"/>
    <property type="molecule type" value="mRNA"/>
</dbReference>
<dbReference type="EMBL" id="V01275">
    <property type="protein sequence ID" value="CAA24582.1"/>
    <property type="molecule type" value="Genomic_DNA"/>
</dbReference>
<dbReference type="EMBL" id="V01276">
    <property type="protein sequence ID" value="CAA24583.1"/>
    <property type="molecule type" value="Genomic_DNA"/>
</dbReference>
<dbReference type="EMBL" id="X01637">
    <property type="protein sequence ID" value="CAA25795.2"/>
    <property type="molecule type" value="Genomic_DNA"/>
</dbReference>
<dbReference type="PIR" id="A90982">
    <property type="entry name" value="NVRT2"/>
</dbReference>
<dbReference type="RefSeq" id="NP_058688.2">
    <property type="nucleotide sequence ID" value="NM_016992.2"/>
</dbReference>
<dbReference type="SMR" id="P01186"/>
<dbReference type="FunCoup" id="P01186">
    <property type="interactions" value="36"/>
</dbReference>
<dbReference type="STRING" id="10116.ENSRNOP00000028833"/>
<dbReference type="GlyCosmos" id="P01186">
    <property type="glycosylation" value="1 site, No reported glycans"/>
</dbReference>
<dbReference type="GlyGen" id="P01186">
    <property type="glycosylation" value="1 site, 1 N-linked;o-linked glycan (1 site)"/>
</dbReference>
<dbReference type="PhosphoSitePlus" id="P01186"/>
<dbReference type="PaxDb" id="10116-ENSRNOP00000028833"/>
<dbReference type="Ensembl" id="ENSRNOT00000028833.6">
    <property type="protein sequence ID" value="ENSRNOP00000028833.2"/>
    <property type="gene ID" value="ENSRNOG00000021229.6"/>
</dbReference>
<dbReference type="GeneID" id="24221"/>
<dbReference type="KEGG" id="rno:24221"/>
<dbReference type="UCSC" id="RGD:2184">
    <property type="organism name" value="rat"/>
</dbReference>
<dbReference type="AGR" id="RGD:2184"/>
<dbReference type="CTD" id="551"/>
<dbReference type="RGD" id="2184">
    <property type="gene designation" value="Avp"/>
</dbReference>
<dbReference type="eggNOG" id="ENOG502S21K">
    <property type="taxonomic scope" value="Eukaryota"/>
</dbReference>
<dbReference type="GeneTree" id="ENSGT00390000004511"/>
<dbReference type="HOGENOM" id="CLU_125770_0_0_1"/>
<dbReference type="InParanoid" id="P01186"/>
<dbReference type="OMA" id="CMTEPEC"/>
<dbReference type="OrthoDB" id="10056056at2759"/>
<dbReference type="PhylomeDB" id="P01186"/>
<dbReference type="TreeFam" id="TF333018"/>
<dbReference type="Reactome" id="R-RNO-388479">
    <property type="pathway name" value="Vasopressin-like receptors"/>
</dbReference>
<dbReference type="Reactome" id="R-RNO-416476">
    <property type="pathway name" value="G alpha (q) signalling events"/>
</dbReference>
<dbReference type="Reactome" id="R-RNO-432040">
    <property type="pathway name" value="Vasopressin regulates renal water homeostasis via Aquaporins"/>
</dbReference>
<dbReference type="Reactome" id="R-RNO-879518">
    <property type="pathway name" value="Transport of organic anions"/>
</dbReference>
<dbReference type="Reactome" id="R-RNO-8856825">
    <property type="pathway name" value="Cargo recognition for clathrin-mediated endocytosis"/>
</dbReference>
<dbReference type="Reactome" id="R-RNO-8856828">
    <property type="pathway name" value="Clathrin-mediated endocytosis"/>
</dbReference>
<dbReference type="PRO" id="PR:P01186"/>
<dbReference type="Proteomes" id="UP000002494">
    <property type="component" value="Chromosome 3"/>
</dbReference>
<dbReference type="Bgee" id="ENSRNOG00000021229">
    <property type="expression patterns" value="Expressed in testis and 9 other cell types or tissues"/>
</dbReference>
<dbReference type="GO" id="GO:0030425">
    <property type="term" value="C:dendrite"/>
    <property type="evidence" value="ECO:0000314"/>
    <property type="project" value="RGD"/>
</dbReference>
<dbReference type="GO" id="GO:0005576">
    <property type="term" value="C:extracellular region"/>
    <property type="evidence" value="ECO:0000314"/>
    <property type="project" value="RGD"/>
</dbReference>
<dbReference type="GO" id="GO:0005615">
    <property type="term" value="C:extracellular space"/>
    <property type="evidence" value="ECO:0000314"/>
    <property type="project" value="RGD"/>
</dbReference>
<dbReference type="GO" id="GO:0098992">
    <property type="term" value="C:neuronal dense core vesicle"/>
    <property type="evidence" value="ECO:0000314"/>
    <property type="project" value="SynGO"/>
</dbReference>
<dbReference type="GO" id="GO:0030141">
    <property type="term" value="C:secretory granule"/>
    <property type="evidence" value="ECO:0000314"/>
    <property type="project" value="RGD"/>
</dbReference>
<dbReference type="GO" id="GO:0005185">
    <property type="term" value="F:neurohypophyseal hormone activity"/>
    <property type="evidence" value="ECO:0007669"/>
    <property type="project" value="InterPro"/>
</dbReference>
<dbReference type="GO" id="GO:0005184">
    <property type="term" value="F:neuropeptide hormone activity"/>
    <property type="evidence" value="ECO:0000314"/>
    <property type="project" value="RGD"/>
</dbReference>
<dbReference type="GO" id="GO:0004672">
    <property type="term" value="F:protein kinase activity"/>
    <property type="evidence" value="ECO:0000266"/>
    <property type="project" value="RGD"/>
</dbReference>
<dbReference type="GO" id="GO:0031894">
    <property type="term" value="F:V1A vasopressin receptor binding"/>
    <property type="evidence" value="ECO:0000314"/>
    <property type="project" value="RGD"/>
</dbReference>
<dbReference type="GO" id="GO:0031895">
    <property type="term" value="F:V1B vasopressin receptor binding"/>
    <property type="evidence" value="ECO:0000315"/>
    <property type="project" value="RGD"/>
</dbReference>
<dbReference type="GO" id="GO:0031896">
    <property type="term" value="F:V2 vasopressin receptor binding"/>
    <property type="evidence" value="ECO:0000304"/>
    <property type="project" value="RGD"/>
</dbReference>
<dbReference type="GO" id="GO:0007625">
    <property type="term" value="P:grooming behavior"/>
    <property type="evidence" value="ECO:0000315"/>
    <property type="project" value="RGD"/>
</dbReference>
<dbReference type="GO" id="GO:0035556">
    <property type="term" value="P:intracellular signal transduction"/>
    <property type="evidence" value="ECO:0000266"/>
    <property type="project" value="RGD"/>
</dbReference>
<dbReference type="GO" id="GO:0007626">
    <property type="term" value="P:locomotory behavior"/>
    <property type="evidence" value="ECO:0000315"/>
    <property type="project" value="RGD"/>
</dbReference>
<dbReference type="GO" id="GO:0002125">
    <property type="term" value="P:maternal aggressive behavior"/>
    <property type="evidence" value="ECO:0000315"/>
    <property type="project" value="RGD"/>
</dbReference>
<dbReference type="GO" id="GO:0042711">
    <property type="term" value="P:maternal behavior"/>
    <property type="evidence" value="ECO:0000315"/>
    <property type="project" value="RGD"/>
</dbReference>
<dbReference type="GO" id="GO:0033555">
    <property type="term" value="P:multicellular organismal response to stress"/>
    <property type="evidence" value="ECO:0000270"/>
    <property type="project" value="RGD"/>
</dbReference>
<dbReference type="GO" id="GO:0050891">
    <property type="term" value="P:multicellular organismal-level water homeostasis"/>
    <property type="evidence" value="ECO:0000315"/>
    <property type="project" value="RGD"/>
</dbReference>
<dbReference type="GO" id="GO:0043066">
    <property type="term" value="P:negative regulation of apoptotic process"/>
    <property type="evidence" value="ECO:0000266"/>
    <property type="project" value="RGD"/>
</dbReference>
<dbReference type="GO" id="GO:0007621">
    <property type="term" value="P:negative regulation of female receptivity"/>
    <property type="evidence" value="ECO:0000315"/>
    <property type="project" value="RGD"/>
</dbReference>
<dbReference type="GO" id="GO:0051970">
    <property type="term" value="P:negative regulation of transmission of nerve impulse"/>
    <property type="evidence" value="ECO:0000315"/>
    <property type="project" value="RGD"/>
</dbReference>
<dbReference type="GO" id="GO:0030307">
    <property type="term" value="P:positive regulation of cell growth"/>
    <property type="evidence" value="ECO:0000315"/>
    <property type="project" value="RGD"/>
</dbReference>
<dbReference type="GO" id="GO:0008284">
    <property type="term" value="P:positive regulation of cell population proliferation"/>
    <property type="evidence" value="ECO:0000315"/>
    <property type="project" value="RGD"/>
</dbReference>
<dbReference type="GO" id="GO:0032849">
    <property type="term" value="P:positive regulation of cellular pH reduction"/>
    <property type="evidence" value="ECO:0000315"/>
    <property type="project" value="RGD"/>
</dbReference>
<dbReference type="GO" id="GO:0007204">
    <property type="term" value="P:positive regulation of cytosolic calcium ion concentration"/>
    <property type="evidence" value="ECO:0000315"/>
    <property type="project" value="RGD"/>
</dbReference>
<dbReference type="GO" id="GO:0010628">
    <property type="term" value="P:positive regulation of gene expression"/>
    <property type="evidence" value="ECO:0000266"/>
    <property type="project" value="RGD"/>
</dbReference>
<dbReference type="GO" id="GO:0014049">
    <property type="term" value="P:positive regulation of glutamate secretion"/>
    <property type="evidence" value="ECO:0000315"/>
    <property type="project" value="RGD"/>
</dbReference>
<dbReference type="GO" id="GO:0031394">
    <property type="term" value="P:positive regulation of prostaglandin biosynthetic process"/>
    <property type="evidence" value="ECO:0000315"/>
    <property type="project" value="RGD"/>
</dbReference>
<dbReference type="GO" id="GO:0003084">
    <property type="term" value="P:positive regulation of systemic arterial blood pressure"/>
    <property type="evidence" value="ECO:0000314"/>
    <property type="project" value="RGD"/>
</dbReference>
<dbReference type="GO" id="GO:0045907">
    <property type="term" value="P:positive regulation of vasoconstriction"/>
    <property type="evidence" value="ECO:0000315"/>
    <property type="project" value="RGD"/>
</dbReference>
<dbReference type="GO" id="GO:1904612">
    <property type="term" value="P:response to 2,3,7,8-tetrachlorodibenzodioxine"/>
    <property type="evidence" value="ECO:0000270"/>
    <property type="project" value="RGD"/>
</dbReference>
<dbReference type="GO" id="GO:0051602">
    <property type="term" value="P:response to electrical stimulus"/>
    <property type="evidence" value="ECO:0000270"/>
    <property type="project" value="RGD"/>
</dbReference>
<dbReference type="GO" id="GO:0045471">
    <property type="term" value="P:response to ethanol"/>
    <property type="evidence" value="ECO:0000315"/>
    <property type="project" value="RGD"/>
</dbReference>
<dbReference type="GO" id="GO:1990089">
    <property type="term" value="P:response to nerve growth factor"/>
    <property type="evidence" value="ECO:0000270"/>
    <property type="project" value="RGD"/>
</dbReference>
<dbReference type="GO" id="GO:0035094">
    <property type="term" value="P:response to nicotine"/>
    <property type="evidence" value="ECO:0000270"/>
    <property type="project" value="RGD"/>
</dbReference>
<dbReference type="GO" id="GO:1901652">
    <property type="term" value="P:response to peptide"/>
    <property type="evidence" value="ECO:0000270"/>
    <property type="project" value="RGD"/>
</dbReference>
<dbReference type="GO" id="GO:0009651">
    <property type="term" value="P:response to salt stress"/>
    <property type="evidence" value="ECO:0000270"/>
    <property type="project" value="RGD"/>
</dbReference>
<dbReference type="GO" id="GO:0033574">
    <property type="term" value="P:response to testosterone"/>
    <property type="evidence" value="ECO:0000270"/>
    <property type="project" value="RGD"/>
</dbReference>
<dbReference type="GO" id="GO:0009410">
    <property type="term" value="P:response to xenobiotic stimulus"/>
    <property type="evidence" value="ECO:0000270"/>
    <property type="project" value="RGD"/>
</dbReference>
<dbReference type="GO" id="GO:0035176">
    <property type="term" value="P:social behavior"/>
    <property type="evidence" value="ECO:0000315"/>
    <property type="project" value="RGD"/>
</dbReference>
<dbReference type="GO" id="GO:0046718">
    <property type="term" value="P:symbiont entry into host cell"/>
    <property type="evidence" value="ECO:0000266"/>
    <property type="project" value="RGD"/>
</dbReference>
<dbReference type="GO" id="GO:0001659">
    <property type="term" value="P:temperature homeostasis"/>
    <property type="evidence" value="ECO:0000304"/>
    <property type="project" value="RGD"/>
</dbReference>
<dbReference type="GO" id="GO:0042310">
    <property type="term" value="P:vasoconstriction"/>
    <property type="evidence" value="ECO:0007669"/>
    <property type="project" value="UniProtKB-KW"/>
</dbReference>
<dbReference type="FunFam" id="2.60.9.10:FF:000001">
    <property type="entry name" value="oxytocin-neurophysin 1"/>
    <property type="match status" value="1"/>
</dbReference>
<dbReference type="Gene3D" id="2.60.9.10">
    <property type="entry name" value="Neurohypophysial hormone domain"/>
    <property type="match status" value="1"/>
</dbReference>
<dbReference type="InterPro" id="IPR000981">
    <property type="entry name" value="Neurhyp_horm"/>
</dbReference>
<dbReference type="InterPro" id="IPR036387">
    <property type="entry name" value="Neurhyp_horm_dom_sf"/>
</dbReference>
<dbReference type="InterPro" id="IPR022423">
    <property type="entry name" value="Neurohypophysial_hormone_CS"/>
</dbReference>
<dbReference type="PANTHER" id="PTHR11681">
    <property type="entry name" value="NEUROPHYSIN"/>
    <property type="match status" value="1"/>
</dbReference>
<dbReference type="PANTHER" id="PTHR11681:SF9">
    <property type="entry name" value="VASOPRESSIN-NEUROPHYSIN 2-COPEPTIN"/>
    <property type="match status" value="1"/>
</dbReference>
<dbReference type="Pfam" id="PF00220">
    <property type="entry name" value="Hormone_4"/>
    <property type="match status" value="1"/>
</dbReference>
<dbReference type="Pfam" id="PF00184">
    <property type="entry name" value="Hormone_5"/>
    <property type="match status" value="1"/>
</dbReference>
<dbReference type="PIRSF" id="PIRSF001815">
    <property type="entry name" value="Nonapeptide_hormone_precursor"/>
    <property type="match status" value="1"/>
</dbReference>
<dbReference type="PRINTS" id="PR00831">
    <property type="entry name" value="NEUROPHYSIN"/>
</dbReference>
<dbReference type="SMART" id="SM00003">
    <property type="entry name" value="NH"/>
    <property type="match status" value="1"/>
</dbReference>
<dbReference type="SUPFAM" id="SSF49606">
    <property type="entry name" value="Neurophysin II"/>
    <property type="match status" value="1"/>
</dbReference>
<dbReference type="PROSITE" id="PS00264">
    <property type="entry name" value="NEUROHYPOPHYS_HORM"/>
    <property type="match status" value="1"/>
</dbReference>
<proteinExistence type="evidence at protein level"/>
<comment type="function">
    <text>Neurophysin 2 specifically binds vasopressin.</text>
</comment>
<comment type="function">
    <text evidence="2">Vasopressin has a direct antidiuretic action on the kidney, it also causes vasoconstriction of the peripheral vessels. Acts by binding to vasopressin receptors (V1bR/AVPR1B, V1aR/AVPR1A, and V2R/AVPR2) (By similarity).</text>
</comment>
<comment type="subunit">
    <text evidence="2">Interacts with vasopressin receptors V1bR/AVPR1B (Ki=85 pM), V1aR/AVPR1A (Ki=0.6 nM) and V2R/AVPR2 (Ki=4.9 nM) (By similarity). Interacts with oxytocin receptor (OXTR) (Ki=110 nM) (By similarity).</text>
</comment>
<comment type="subcellular location">
    <subcellularLocation>
        <location>Secreted</location>
    </subcellularLocation>
</comment>
<comment type="similarity">
    <text evidence="4">Belongs to the vasopressin/oxytocin family.</text>
</comment>
<comment type="sequence caution" evidence="4">
    <conflict type="erroneous initiation">
        <sequence resource="EMBL-CDS" id="AAA42342"/>
    </conflict>
</comment>
<organism>
    <name type="scientific">Rattus norvegicus</name>
    <name type="common">Rat</name>
    <dbReference type="NCBI Taxonomy" id="10116"/>
    <lineage>
        <taxon>Eukaryota</taxon>
        <taxon>Metazoa</taxon>
        <taxon>Chordata</taxon>
        <taxon>Craniata</taxon>
        <taxon>Vertebrata</taxon>
        <taxon>Euteleostomi</taxon>
        <taxon>Mammalia</taxon>
        <taxon>Eutheria</taxon>
        <taxon>Euarchontoglires</taxon>
        <taxon>Glires</taxon>
        <taxon>Rodentia</taxon>
        <taxon>Myomorpha</taxon>
        <taxon>Muroidea</taxon>
        <taxon>Muridae</taxon>
        <taxon>Murinae</taxon>
        <taxon>Rattus</taxon>
    </lineage>
</organism>
<feature type="signal peptide">
    <location>
        <begin position="1"/>
        <end position="23"/>
    </location>
</feature>
<feature type="peptide" id="PRO_0000020524" description="Arg-vasopressin">
    <location>
        <begin position="24"/>
        <end position="32"/>
    </location>
</feature>
<feature type="chain" id="PRO_0000020525" description="Neurophysin 2">
    <location>
        <begin position="36"/>
        <end position="128"/>
    </location>
</feature>
<feature type="peptide" id="PRO_0000020526" description="Copeptin">
    <location>
        <begin position="130"/>
        <end position="168"/>
    </location>
</feature>
<feature type="site" description="Important for agonist activity on V1aR/AVPR1A" evidence="2">
    <location>
        <position position="32"/>
    </location>
</feature>
<feature type="modified residue" description="Glycine amide" evidence="3">
    <location>
        <position position="32"/>
    </location>
</feature>
<feature type="glycosylation site" description="N-linked (GlcNAc...) asparagine">
    <location>
        <position position="135"/>
    </location>
</feature>
<feature type="disulfide bond">
    <location>
        <begin position="24"/>
        <end position="29"/>
    </location>
</feature>
<feature type="disulfide bond" evidence="1">
    <location>
        <begin position="45"/>
        <end position="89"/>
    </location>
</feature>
<feature type="disulfide bond" evidence="1">
    <location>
        <begin position="48"/>
        <end position="62"/>
    </location>
</feature>
<feature type="disulfide bond" evidence="1">
    <location>
        <begin position="56"/>
        <end position="79"/>
    </location>
</feature>
<feature type="disulfide bond" evidence="1">
    <location>
        <begin position="63"/>
        <end position="69"/>
    </location>
</feature>
<feature type="disulfide bond" evidence="1">
    <location>
        <begin position="96"/>
        <end position="108"/>
    </location>
</feature>
<feature type="disulfide bond" evidence="1">
    <location>
        <begin position="102"/>
        <end position="120"/>
    </location>
</feature>
<feature type="disulfide bond" evidence="1">
    <location>
        <begin position="109"/>
        <end position="114"/>
    </location>
</feature>
<keyword id="KW-0027">Amidation</keyword>
<keyword id="KW-0165">Cleavage on pair of basic residues</keyword>
<keyword id="KW-0903">Direct protein sequencing</keyword>
<keyword id="KW-1015">Disulfide bond</keyword>
<keyword id="KW-0325">Glycoprotein</keyword>
<keyword id="KW-0372">Hormone</keyword>
<keyword id="KW-1185">Reference proteome</keyword>
<keyword id="KW-0964">Secreted</keyword>
<keyword id="KW-0732">Signal</keyword>
<keyword id="KW-0838">Vasoactive</keyword>
<keyword id="KW-0839">Vasoconstrictor</keyword>
<reference key="1">
    <citation type="journal article" date="1991" name="DNA Cell Biol.">
        <title>Rat vasopressin and oxytocin genes are linked by a long interspersed repeated DNA element (LINE): sequence and transcriptional analysis of LINE.</title>
        <authorList>
            <person name="Schmitz E."/>
            <person name="Mohr E."/>
            <person name="Richter D."/>
        </authorList>
    </citation>
    <scope>NUCLEOTIDE SEQUENCE [GENOMIC DNA]</scope>
    <source>
        <strain>Wistar</strain>
        <tissue>Liver</tissue>
    </source>
</reference>
<reference key="2">
    <citation type="journal article" date="1986" name="Biol. Chem. Hoppe-Seyler">
        <title>The neurohypophyseal hormones vasopressin and oxytocin. Precursor structure, synthesis and regulation.</title>
        <authorList>
            <person name="Rehbein M."/>
            <person name="Hillers M."/>
            <person name="Mohr E."/>
            <person name="Ivell R."/>
            <person name="Morley S."/>
            <person name="Schmale H."/>
            <person name="Richter D."/>
        </authorList>
    </citation>
    <scope>NUCLEOTIDE SEQUENCE</scope>
</reference>
<reference key="3">
    <citation type="journal article" date="1983" name="EMBO J.">
        <title>Structural organization of the rat gene for the arginine vasopressin-neurophysin precursor.</title>
        <authorList>
            <person name="Schmale H."/>
            <person name="Heinsohn S."/>
            <person name="Richter D."/>
        </authorList>
    </citation>
    <scope>NUCLEOTIDE SEQUENCE [GENOMIC DNA]</scope>
</reference>
<reference key="4">
    <citation type="journal article" date="1984" name="EMBO J.">
        <title>The mutant vasopressin gene from diabetes insipidus (Brattleboro) rats is transcribed but the message is not efficiently translated.</title>
        <authorList>
            <person name="Schmale H."/>
            <person name="Ivell R."/>
            <person name="Breindl M."/>
            <person name="Darmer D."/>
            <person name="Richter D."/>
        </authorList>
    </citation>
    <scope>NUCLEOTIDE SEQUENCE [GENOMIC DNA]</scope>
</reference>
<reference key="5">
    <citation type="journal article" date="1971" name="Biochimie">
        <title>Evolution of neurohypophyseal hormones: isolation of active principles from rabbits and rats.</title>
        <authorList>
            <person name="Chauvet J."/>
            <person name="Chauvet M.-T."/>
            <person name="Acher R."/>
        </authorList>
    </citation>
    <scope>AMINO-ACID COMPOSITION OF 24-32</scope>
    <scope>AMIDATION AT GLY-32</scope>
</reference>
<reference key="6">
    <citation type="journal article" date="1981" name="Biochem. Biophys. Res. Commun.">
        <title>Identification of rat neurophysins: complete amino acid sequences of MSEL- and VLDV-neurophysins.</title>
        <authorList>
            <person name="Chauvet M.-T."/>
            <person name="Chauvet J."/>
            <person name="Acher R."/>
        </authorList>
    </citation>
    <scope>PROTEIN SEQUENCE OF 36-128</scope>
</reference>
<reference key="7">
    <citation type="journal article" date="1977" name="FEBS Lett.">
        <title>A comparative study of partial neurophysin protein sequences of cod, guinea pig, rat and sheep.</title>
        <authorList>
            <person name="Schlesinger D.H."/>
            <person name="Pickering B.T."/>
            <person name="Watkins W.B."/>
            <person name="Peek J.C."/>
            <person name="Moore L.G."/>
            <person name="Audhya T.K."/>
            <person name="Walter R."/>
        </authorList>
    </citation>
    <scope>PROTEIN SEQUENCE OF 36-68</scope>
</reference>
<reference key="8">
    <citation type="journal article" date="1983" name="FEBS Lett.">
        <title>The glycopeptide domain of the rat vasopressin precursor.</title>
        <authorList>
            <person name="Chauvet M.-T."/>
            <person name="Chauvet J."/>
            <person name="Acher R."/>
        </authorList>
    </citation>
    <scope>PROTEIN SEQUENCE OF 130-168</scope>
</reference>
<reference key="9">
    <citation type="journal article" date="1986" name="Eur. J. Biochem.">
        <title>Isolation and primary structure of novel neurointermediate pituitary peptides derived from the C-terminal of the rat vasopressin-neurophysin precursor (propressophysin).</title>
        <authorList>
            <person name="Burbach J.P.H."/>
            <person name="Seidah N.G."/>
            <person name="Chretien M."/>
        </authorList>
    </citation>
    <scope>PROTEIN SEQUENCE OF 130-168</scope>
</reference>
<gene>
    <name type="primary">Avp</name>
</gene>
<sequence>MLAMMLNTTLSACFLSLLALTSACYFQNCPRGGKRATSDMELRQCLPCGPGGKGRCFGPSICCADELGCFLGTAEALRCQEENYLPSPCQSGQKPCGSGGRCAAAGICCSDESCVAEPECREGFFRLTRAREQSNATQLDGPARELLLRLVQLAGTQESVDSAKPRVY</sequence>